<keyword id="KW-0227">DNA damage</keyword>
<keyword id="KW-0234">DNA repair</keyword>
<keyword id="KW-0238">DNA-binding</keyword>
<keyword id="KW-0326">Glycosidase</keyword>
<keyword id="KW-0378">Hydrolase</keyword>
<keyword id="KW-0456">Lyase</keyword>
<keyword id="KW-0479">Metal-binding</keyword>
<keyword id="KW-0511">Multifunctional enzyme</keyword>
<keyword id="KW-0862">Zinc</keyword>
<keyword id="KW-0863">Zinc-finger</keyword>
<protein>
    <recommendedName>
        <fullName evidence="2">Formamidopyrimidine-DNA glycosylase</fullName>
        <shortName evidence="2">Fapy-DNA glycosylase</shortName>
        <ecNumber evidence="2">3.2.2.23</ecNumber>
    </recommendedName>
    <alternativeName>
        <fullName evidence="2">DNA-(apurinic or apyrimidinic site) lyase MutM</fullName>
        <shortName evidence="2">AP lyase MutM</shortName>
        <ecNumber evidence="2">4.2.99.18</ecNumber>
    </alternativeName>
</protein>
<accession>Q7MPS3</accession>
<organism>
    <name type="scientific">Vibrio vulnificus (strain YJ016)</name>
    <dbReference type="NCBI Taxonomy" id="196600"/>
    <lineage>
        <taxon>Bacteria</taxon>
        <taxon>Pseudomonadati</taxon>
        <taxon>Pseudomonadota</taxon>
        <taxon>Gammaproteobacteria</taxon>
        <taxon>Vibrionales</taxon>
        <taxon>Vibrionaceae</taxon>
        <taxon>Vibrio</taxon>
    </lineage>
</organism>
<feature type="initiator methionine" description="Removed" evidence="1">
    <location>
        <position position="1"/>
    </location>
</feature>
<feature type="chain" id="PRO_0000170885" description="Formamidopyrimidine-DNA glycosylase">
    <location>
        <begin position="2"/>
        <end position="269"/>
    </location>
</feature>
<feature type="zinc finger region" description="FPG-type" evidence="2">
    <location>
        <begin position="235"/>
        <end position="269"/>
    </location>
</feature>
<feature type="active site" description="Schiff-base intermediate with DNA" evidence="2">
    <location>
        <position position="2"/>
    </location>
</feature>
<feature type="active site" description="Proton donor" evidence="2">
    <location>
        <position position="3"/>
    </location>
</feature>
<feature type="active site" description="Proton donor; for beta-elimination activity" evidence="2">
    <location>
        <position position="57"/>
    </location>
</feature>
<feature type="active site" description="Proton donor; for delta-elimination activity" evidence="2">
    <location>
        <position position="259"/>
    </location>
</feature>
<feature type="binding site" evidence="2">
    <location>
        <position position="90"/>
    </location>
    <ligand>
        <name>DNA</name>
        <dbReference type="ChEBI" id="CHEBI:16991"/>
    </ligand>
</feature>
<feature type="binding site" evidence="2">
    <location>
        <position position="109"/>
    </location>
    <ligand>
        <name>DNA</name>
        <dbReference type="ChEBI" id="CHEBI:16991"/>
    </ligand>
</feature>
<feature type="binding site" evidence="2">
    <location>
        <position position="150"/>
    </location>
    <ligand>
        <name>DNA</name>
        <dbReference type="ChEBI" id="CHEBI:16991"/>
    </ligand>
</feature>
<comment type="function">
    <text evidence="2">Involved in base excision repair of DNA damaged by oxidation or by mutagenic agents. Acts as a DNA glycosylase that recognizes and removes damaged bases. Has a preference for oxidized purines, such as 7,8-dihydro-8-oxoguanine (8-oxoG). Has AP (apurinic/apyrimidinic) lyase activity and introduces nicks in the DNA strand. Cleaves the DNA backbone by beta-delta elimination to generate a single-strand break at the site of the removed base with both 3'- and 5'-phosphates.</text>
</comment>
<comment type="catalytic activity">
    <reaction evidence="2">
        <text>Hydrolysis of DNA containing ring-opened 7-methylguanine residues, releasing 2,6-diamino-4-hydroxy-5-(N-methyl)formamidopyrimidine.</text>
        <dbReference type="EC" id="3.2.2.23"/>
    </reaction>
</comment>
<comment type="catalytic activity">
    <reaction evidence="2">
        <text>2'-deoxyribonucleotide-(2'-deoxyribose 5'-phosphate)-2'-deoxyribonucleotide-DNA = a 3'-end 2'-deoxyribonucleotide-(2,3-dehydro-2,3-deoxyribose 5'-phosphate)-DNA + a 5'-end 5'-phospho-2'-deoxyribonucleoside-DNA + H(+)</text>
        <dbReference type="Rhea" id="RHEA:66592"/>
        <dbReference type="Rhea" id="RHEA-COMP:13180"/>
        <dbReference type="Rhea" id="RHEA-COMP:16897"/>
        <dbReference type="Rhea" id="RHEA-COMP:17067"/>
        <dbReference type="ChEBI" id="CHEBI:15378"/>
        <dbReference type="ChEBI" id="CHEBI:136412"/>
        <dbReference type="ChEBI" id="CHEBI:157695"/>
        <dbReference type="ChEBI" id="CHEBI:167181"/>
        <dbReference type="EC" id="4.2.99.18"/>
    </reaction>
</comment>
<comment type="cofactor">
    <cofactor evidence="2">
        <name>Zn(2+)</name>
        <dbReference type="ChEBI" id="CHEBI:29105"/>
    </cofactor>
    <text evidence="2">Binds 1 zinc ion per subunit.</text>
</comment>
<comment type="subunit">
    <text evidence="2">Monomer.</text>
</comment>
<comment type="similarity">
    <text evidence="2">Belongs to the FPG family.</text>
</comment>
<comment type="sequence caution" evidence="3">
    <conflict type="erroneous initiation">
        <sequence resource="EMBL-CDS" id="BAC93053"/>
    </conflict>
</comment>
<dbReference type="EC" id="3.2.2.23" evidence="2"/>
<dbReference type="EC" id="4.2.99.18" evidence="2"/>
<dbReference type="EMBL" id="BA000037">
    <property type="protein sequence ID" value="BAC93053.1"/>
    <property type="status" value="ALT_INIT"/>
    <property type="molecule type" value="Genomic_DNA"/>
</dbReference>
<dbReference type="RefSeq" id="WP_043877034.1">
    <property type="nucleotide sequence ID" value="NC_005139.1"/>
</dbReference>
<dbReference type="SMR" id="Q7MPS3"/>
<dbReference type="STRING" id="672.VV93_v1c02810"/>
<dbReference type="KEGG" id="vvy:VV0289"/>
<dbReference type="PATRIC" id="fig|196600.6.peg.324"/>
<dbReference type="eggNOG" id="COG0266">
    <property type="taxonomic scope" value="Bacteria"/>
</dbReference>
<dbReference type="HOGENOM" id="CLU_038423_1_1_6"/>
<dbReference type="Proteomes" id="UP000002675">
    <property type="component" value="Chromosome I"/>
</dbReference>
<dbReference type="GO" id="GO:0034039">
    <property type="term" value="F:8-oxo-7,8-dihydroguanine DNA N-glycosylase activity"/>
    <property type="evidence" value="ECO:0007669"/>
    <property type="project" value="TreeGrafter"/>
</dbReference>
<dbReference type="GO" id="GO:0140078">
    <property type="term" value="F:class I DNA-(apurinic or apyrimidinic site) endonuclease activity"/>
    <property type="evidence" value="ECO:0007669"/>
    <property type="project" value="UniProtKB-EC"/>
</dbReference>
<dbReference type="GO" id="GO:0003684">
    <property type="term" value="F:damaged DNA binding"/>
    <property type="evidence" value="ECO:0007669"/>
    <property type="project" value="InterPro"/>
</dbReference>
<dbReference type="GO" id="GO:0008270">
    <property type="term" value="F:zinc ion binding"/>
    <property type="evidence" value="ECO:0007669"/>
    <property type="project" value="UniProtKB-UniRule"/>
</dbReference>
<dbReference type="GO" id="GO:0006284">
    <property type="term" value="P:base-excision repair"/>
    <property type="evidence" value="ECO:0007669"/>
    <property type="project" value="InterPro"/>
</dbReference>
<dbReference type="CDD" id="cd08966">
    <property type="entry name" value="EcFpg-like_N"/>
    <property type="match status" value="1"/>
</dbReference>
<dbReference type="FunFam" id="1.10.8.50:FF:000003">
    <property type="entry name" value="Formamidopyrimidine-DNA glycosylase"/>
    <property type="match status" value="1"/>
</dbReference>
<dbReference type="FunFam" id="3.20.190.10:FF:000001">
    <property type="entry name" value="Formamidopyrimidine-DNA glycosylase"/>
    <property type="match status" value="1"/>
</dbReference>
<dbReference type="Gene3D" id="1.10.8.50">
    <property type="match status" value="1"/>
</dbReference>
<dbReference type="Gene3D" id="3.20.190.10">
    <property type="entry name" value="MutM-like, N-terminal"/>
    <property type="match status" value="1"/>
</dbReference>
<dbReference type="HAMAP" id="MF_00103">
    <property type="entry name" value="Fapy_DNA_glycosyl"/>
    <property type="match status" value="1"/>
</dbReference>
<dbReference type="InterPro" id="IPR015886">
    <property type="entry name" value="DNA_glyclase/AP_lyase_DNA-bd"/>
</dbReference>
<dbReference type="InterPro" id="IPR015887">
    <property type="entry name" value="DNA_glyclase_Znf_dom_DNA_BS"/>
</dbReference>
<dbReference type="InterPro" id="IPR020629">
    <property type="entry name" value="Formamido-pyr_DNA_Glyclase"/>
</dbReference>
<dbReference type="InterPro" id="IPR012319">
    <property type="entry name" value="FPG_cat"/>
</dbReference>
<dbReference type="InterPro" id="IPR035937">
    <property type="entry name" value="MutM-like_N-ter"/>
</dbReference>
<dbReference type="InterPro" id="IPR010979">
    <property type="entry name" value="Ribosomal_uS13-like_H2TH"/>
</dbReference>
<dbReference type="InterPro" id="IPR000214">
    <property type="entry name" value="Znf_DNA_glyclase/AP_lyase"/>
</dbReference>
<dbReference type="InterPro" id="IPR010663">
    <property type="entry name" value="Znf_FPG/IleRS"/>
</dbReference>
<dbReference type="NCBIfam" id="TIGR00577">
    <property type="entry name" value="fpg"/>
    <property type="match status" value="1"/>
</dbReference>
<dbReference type="NCBIfam" id="NF002211">
    <property type="entry name" value="PRK01103.1"/>
    <property type="match status" value="1"/>
</dbReference>
<dbReference type="PANTHER" id="PTHR22993">
    <property type="entry name" value="FORMAMIDOPYRIMIDINE-DNA GLYCOSYLASE"/>
    <property type="match status" value="1"/>
</dbReference>
<dbReference type="PANTHER" id="PTHR22993:SF9">
    <property type="entry name" value="FORMAMIDOPYRIMIDINE-DNA GLYCOSYLASE"/>
    <property type="match status" value="1"/>
</dbReference>
<dbReference type="Pfam" id="PF01149">
    <property type="entry name" value="Fapy_DNA_glyco"/>
    <property type="match status" value="1"/>
</dbReference>
<dbReference type="Pfam" id="PF06831">
    <property type="entry name" value="H2TH"/>
    <property type="match status" value="1"/>
</dbReference>
<dbReference type="Pfam" id="PF06827">
    <property type="entry name" value="zf-FPG_IleRS"/>
    <property type="match status" value="1"/>
</dbReference>
<dbReference type="SMART" id="SM00898">
    <property type="entry name" value="Fapy_DNA_glyco"/>
    <property type="match status" value="1"/>
</dbReference>
<dbReference type="SMART" id="SM01232">
    <property type="entry name" value="H2TH"/>
    <property type="match status" value="1"/>
</dbReference>
<dbReference type="SUPFAM" id="SSF57716">
    <property type="entry name" value="Glucocorticoid receptor-like (DNA-binding domain)"/>
    <property type="match status" value="1"/>
</dbReference>
<dbReference type="SUPFAM" id="SSF81624">
    <property type="entry name" value="N-terminal domain of MutM-like DNA repair proteins"/>
    <property type="match status" value="1"/>
</dbReference>
<dbReference type="SUPFAM" id="SSF46946">
    <property type="entry name" value="S13-like H2TH domain"/>
    <property type="match status" value="1"/>
</dbReference>
<dbReference type="PROSITE" id="PS51068">
    <property type="entry name" value="FPG_CAT"/>
    <property type="match status" value="1"/>
</dbReference>
<dbReference type="PROSITE" id="PS01242">
    <property type="entry name" value="ZF_FPG_1"/>
    <property type="match status" value="1"/>
</dbReference>
<dbReference type="PROSITE" id="PS51066">
    <property type="entry name" value="ZF_FPG_2"/>
    <property type="match status" value="1"/>
</dbReference>
<sequence length="269" mass="30066">MPELPEVEVSRMGITPHLLNQTIQSLIFRTPKLRWVIPSELKKLQGQVIRHIGRRAKYLIIETDVGSAIVHLGMSGSLRVLDADFPAGKHDHVDLKLSNGKVLRYNDPRRFGAWLYAAPGEDHDVLGNIGPEPLTDAFDGQYMFEKAQGKRVAVKQFIMDNKIVVGVGNIYASESLFRSRILPTRATMSLSAEEWQRLVSHIKQTLQTAIEQGGTTLKDFSQADGKPGYFAQELQVYGKAGESCPECGEAIQELKIGQRNTFYCSYCQC</sequence>
<gene>
    <name evidence="2" type="primary">mutM</name>
    <name evidence="2" type="synonym">fpg</name>
    <name type="ordered locus">VV0289</name>
</gene>
<name>FPG_VIBVY</name>
<proteinExistence type="inferred from homology"/>
<evidence type="ECO:0000250" key="1"/>
<evidence type="ECO:0000255" key="2">
    <source>
        <dbReference type="HAMAP-Rule" id="MF_00103"/>
    </source>
</evidence>
<evidence type="ECO:0000305" key="3"/>
<reference key="1">
    <citation type="journal article" date="2003" name="Genome Res.">
        <title>Comparative genome analysis of Vibrio vulnificus, a marine pathogen.</title>
        <authorList>
            <person name="Chen C.-Y."/>
            <person name="Wu K.-M."/>
            <person name="Chang Y.-C."/>
            <person name="Chang C.-H."/>
            <person name="Tsai H.-C."/>
            <person name="Liao T.-L."/>
            <person name="Liu Y.-M."/>
            <person name="Chen H.-J."/>
            <person name="Shen A.B.-T."/>
            <person name="Li J.-C."/>
            <person name="Su T.-L."/>
            <person name="Shao C.-P."/>
            <person name="Lee C.-T."/>
            <person name="Hor L.-I."/>
            <person name="Tsai S.-F."/>
        </authorList>
    </citation>
    <scope>NUCLEOTIDE SEQUENCE [LARGE SCALE GENOMIC DNA]</scope>
    <source>
        <strain>YJ016</strain>
    </source>
</reference>